<sequence length="369" mass="40853">MTSILGSARPLIQVGPKSRNASTSMSRLPSFPTTRPCRRAPCSSSSYATISPTAPRSSQRNPTNASRHPRIDEVDHIPTSALGRVLLTAGSALGLLNNPSRGDLLSMLTQVSSGPSLAHLLESMRSTESGRRLLIERPSVNSETVDVDYLASLERGKFGREWIEWLKDNGVGPDGRAEADYMTTLEHKYLIQRYRESHDFYHLLLRMPVTQLGETVVKYFELAQMNMPVAGFAAAGGTLRILASSLSALPKPSQLISAALNRSPAPETAHQPPSSADLSALQTLIPWAMQVGSSSVPLISIEWERCWERDIEEMRREFRITSPPIQVAKFSGRAKKGGKRRGWPSKILEHQKAQHQQQQQQQKVDESRN</sequence>
<proteinExistence type="inferred from homology"/>
<gene>
    <name evidence="1" type="primary">COQ4</name>
    <name type="ORF">UMAG_04495</name>
</gene>
<reference key="1">
    <citation type="journal article" date="2006" name="Nature">
        <title>Insights from the genome of the biotrophic fungal plant pathogen Ustilago maydis.</title>
        <authorList>
            <person name="Kaemper J."/>
            <person name="Kahmann R."/>
            <person name="Boelker M."/>
            <person name="Ma L.-J."/>
            <person name="Brefort T."/>
            <person name="Saville B.J."/>
            <person name="Banuett F."/>
            <person name="Kronstad J.W."/>
            <person name="Gold S.E."/>
            <person name="Mueller O."/>
            <person name="Perlin M.H."/>
            <person name="Woesten H.A.B."/>
            <person name="de Vries R."/>
            <person name="Ruiz-Herrera J."/>
            <person name="Reynaga-Pena C.G."/>
            <person name="Snetselaar K."/>
            <person name="McCann M."/>
            <person name="Perez-Martin J."/>
            <person name="Feldbruegge M."/>
            <person name="Basse C.W."/>
            <person name="Steinberg G."/>
            <person name="Ibeas J.I."/>
            <person name="Holloman W."/>
            <person name="Guzman P."/>
            <person name="Farman M.L."/>
            <person name="Stajich J.E."/>
            <person name="Sentandreu R."/>
            <person name="Gonzalez-Prieto J.M."/>
            <person name="Kennell J.C."/>
            <person name="Molina L."/>
            <person name="Schirawski J."/>
            <person name="Mendoza-Mendoza A."/>
            <person name="Greilinger D."/>
            <person name="Muench K."/>
            <person name="Roessel N."/>
            <person name="Scherer M."/>
            <person name="Vranes M."/>
            <person name="Ladendorf O."/>
            <person name="Vincon V."/>
            <person name="Fuchs U."/>
            <person name="Sandrock B."/>
            <person name="Meng S."/>
            <person name="Ho E.C.H."/>
            <person name="Cahill M.J."/>
            <person name="Boyce K.J."/>
            <person name="Klose J."/>
            <person name="Klosterman S.J."/>
            <person name="Deelstra H.J."/>
            <person name="Ortiz-Castellanos L."/>
            <person name="Li W."/>
            <person name="Sanchez-Alonso P."/>
            <person name="Schreier P.H."/>
            <person name="Haeuser-Hahn I."/>
            <person name="Vaupel M."/>
            <person name="Koopmann E."/>
            <person name="Friedrich G."/>
            <person name="Voss H."/>
            <person name="Schlueter T."/>
            <person name="Margolis J."/>
            <person name="Platt D."/>
            <person name="Swimmer C."/>
            <person name="Gnirke A."/>
            <person name="Chen F."/>
            <person name="Vysotskaia V."/>
            <person name="Mannhaupt G."/>
            <person name="Gueldener U."/>
            <person name="Muensterkoetter M."/>
            <person name="Haase D."/>
            <person name="Oesterheld M."/>
            <person name="Mewes H.-W."/>
            <person name="Mauceli E.W."/>
            <person name="DeCaprio D."/>
            <person name="Wade C.M."/>
            <person name="Butler J."/>
            <person name="Young S.K."/>
            <person name="Jaffe D.B."/>
            <person name="Calvo S.E."/>
            <person name="Nusbaum C."/>
            <person name="Galagan J.E."/>
            <person name="Birren B.W."/>
        </authorList>
    </citation>
    <scope>NUCLEOTIDE SEQUENCE [LARGE SCALE GENOMIC DNA]</scope>
    <source>
        <strain>DSM 14603 / FGSC 9021 / UM521</strain>
    </source>
</reference>
<reference key="2">
    <citation type="submission" date="2014-09" db="EMBL/GenBank/DDBJ databases">
        <authorList>
            <person name="Gueldener U."/>
            <person name="Muensterkoetter M."/>
            <person name="Walter M.C."/>
            <person name="Mannhaupt G."/>
            <person name="Kahmann R."/>
        </authorList>
    </citation>
    <scope>GENOME REANNOTATION</scope>
    <source>
        <strain>DSM 14603 / FGSC 9021 / UM521</strain>
    </source>
</reference>
<keyword id="KW-0456">Lyase</keyword>
<keyword id="KW-0472">Membrane</keyword>
<keyword id="KW-0479">Metal-binding</keyword>
<keyword id="KW-0496">Mitochondrion</keyword>
<keyword id="KW-0999">Mitochondrion inner membrane</keyword>
<keyword id="KW-1185">Reference proteome</keyword>
<keyword id="KW-0809">Transit peptide</keyword>
<keyword id="KW-0831">Ubiquinone biosynthesis</keyword>
<keyword id="KW-0862">Zinc</keyword>
<name>COQ4_MYCMD</name>
<dbReference type="EC" id="4.1.1.130" evidence="1"/>
<dbReference type="EMBL" id="CM003152">
    <property type="protein sequence ID" value="KIS67395.1"/>
    <property type="molecule type" value="Genomic_DNA"/>
</dbReference>
<dbReference type="RefSeq" id="XP_011390829.1">
    <property type="nucleotide sequence ID" value="XM_011392527.1"/>
</dbReference>
<dbReference type="SMR" id="Q4P5W8"/>
<dbReference type="FunCoup" id="Q4P5W8">
    <property type="interactions" value="293"/>
</dbReference>
<dbReference type="STRING" id="237631.Q4P5W8"/>
<dbReference type="EnsemblFungi" id="KIS67395">
    <property type="protein sequence ID" value="KIS67395"/>
    <property type="gene ID" value="UMAG_04495"/>
</dbReference>
<dbReference type="GeneID" id="23564661"/>
<dbReference type="KEGG" id="uma:UMAG_04495"/>
<dbReference type="VEuPathDB" id="FungiDB:UMAG_04495"/>
<dbReference type="eggNOG" id="KOG3244">
    <property type="taxonomic scope" value="Eukaryota"/>
</dbReference>
<dbReference type="HOGENOM" id="CLU_061241_1_1_1"/>
<dbReference type="InParanoid" id="Q4P5W8"/>
<dbReference type="OMA" id="PLISIEW"/>
<dbReference type="OrthoDB" id="4249at2759"/>
<dbReference type="UniPathway" id="UPA00232"/>
<dbReference type="Proteomes" id="UP000000561">
    <property type="component" value="Chromosome 13"/>
</dbReference>
<dbReference type="GO" id="GO:0031314">
    <property type="term" value="C:extrinsic component of mitochondrial inner membrane"/>
    <property type="evidence" value="ECO:0007669"/>
    <property type="project" value="UniProtKB-UniRule"/>
</dbReference>
<dbReference type="GO" id="GO:0005739">
    <property type="term" value="C:mitochondrion"/>
    <property type="evidence" value="ECO:0000318"/>
    <property type="project" value="GO_Central"/>
</dbReference>
<dbReference type="GO" id="GO:0006744">
    <property type="term" value="P:ubiquinone biosynthetic process"/>
    <property type="evidence" value="ECO:0007669"/>
    <property type="project" value="UniProtKB-UniRule"/>
</dbReference>
<dbReference type="HAMAP" id="MF_03111">
    <property type="entry name" value="Coq4"/>
    <property type="match status" value="1"/>
</dbReference>
<dbReference type="InterPro" id="IPR007715">
    <property type="entry name" value="Coq4"/>
</dbReference>
<dbReference type="InterPro" id="IPR027540">
    <property type="entry name" value="Coq4_euk"/>
</dbReference>
<dbReference type="PANTHER" id="PTHR12922">
    <property type="entry name" value="UBIQUINONE BIOSYNTHESIS PROTEIN"/>
    <property type="match status" value="1"/>
</dbReference>
<dbReference type="PANTHER" id="PTHR12922:SF7">
    <property type="entry name" value="UBIQUINONE BIOSYNTHESIS PROTEIN COQ4 HOMOLOG, MITOCHONDRIAL"/>
    <property type="match status" value="1"/>
</dbReference>
<dbReference type="Pfam" id="PF05019">
    <property type="entry name" value="Coq4"/>
    <property type="match status" value="2"/>
</dbReference>
<organism>
    <name type="scientific">Mycosarcoma maydis</name>
    <name type="common">Corn smut fungus</name>
    <name type="synonym">Ustilago maydis</name>
    <dbReference type="NCBI Taxonomy" id="5270"/>
    <lineage>
        <taxon>Eukaryota</taxon>
        <taxon>Fungi</taxon>
        <taxon>Dikarya</taxon>
        <taxon>Basidiomycota</taxon>
        <taxon>Ustilaginomycotina</taxon>
        <taxon>Ustilaginomycetes</taxon>
        <taxon>Ustilaginales</taxon>
        <taxon>Ustilaginaceae</taxon>
        <taxon>Mycosarcoma</taxon>
    </lineage>
</organism>
<comment type="function">
    <text evidence="1">Lyase that catalyzes the C1-decarboxylation of 4-hydroxy-3-methoxy-5-(all-trans-polyprenyl)benzoic acid into 2-methoxy-6-(all-trans-polyprenyl)phenol during ubiquinone biosynthesis.</text>
</comment>
<comment type="catalytic activity">
    <reaction evidence="1">
        <text>a 4-hydroxy-3-methoxy-5-(all-trans-polyprenyl)benzoate + H(+) = a 2-methoxy-6-(all-trans-polyprenyl)phenol + CO2</text>
        <dbReference type="Rhea" id="RHEA:81179"/>
        <dbReference type="Rhea" id="RHEA-COMP:9551"/>
        <dbReference type="Rhea" id="RHEA-COMP:10931"/>
        <dbReference type="ChEBI" id="CHEBI:15378"/>
        <dbReference type="ChEBI" id="CHEBI:16526"/>
        <dbReference type="ChEBI" id="CHEBI:62731"/>
        <dbReference type="ChEBI" id="CHEBI:84443"/>
        <dbReference type="EC" id="4.1.1.130"/>
    </reaction>
</comment>
<comment type="cofactor">
    <cofactor evidence="1">
        <name>Zn(2+)</name>
        <dbReference type="ChEBI" id="CHEBI:29105"/>
    </cofactor>
</comment>
<comment type="pathway">
    <text evidence="1">Cofactor biosynthesis; ubiquinone biosynthesis.</text>
</comment>
<comment type="subunit">
    <text evidence="1">Component of a multi-subunit COQ enzyme complex, composed of at least COQ3, COQ4, COQ5, COQ6, COQ7 and COQ9.</text>
</comment>
<comment type="subcellular location">
    <subcellularLocation>
        <location evidence="1">Mitochondrion inner membrane</location>
        <topology evidence="1">Peripheral membrane protein</topology>
        <orientation evidence="1">Matrix side</orientation>
    </subcellularLocation>
</comment>
<comment type="similarity">
    <text evidence="1">Belongs to the COQ4 family.</text>
</comment>
<evidence type="ECO:0000255" key="1">
    <source>
        <dbReference type="HAMAP-Rule" id="MF_03111"/>
    </source>
</evidence>
<evidence type="ECO:0000256" key="2">
    <source>
        <dbReference type="SAM" id="MobiDB-lite"/>
    </source>
</evidence>
<feature type="transit peptide" description="Mitochondrion" evidence="1">
    <location>
        <begin position="1"/>
        <end position="28"/>
    </location>
</feature>
<feature type="chain" id="PRO_0000388141" description="Ubiquinone biosynthesis protein COQ4, mitochondrial">
    <location>
        <begin position="29"/>
        <end position="369"/>
    </location>
</feature>
<feature type="region of interest" description="Disordered" evidence="2">
    <location>
        <begin position="1"/>
        <end position="70"/>
    </location>
</feature>
<feature type="region of interest" description="Disordered" evidence="2">
    <location>
        <begin position="330"/>
        <end position="369"/>
    </location>
</feature>
<feature type="compositionally biased region" description="Polar residues" evidence="2">
    <location>
        <begin position="19"/>
        <end position="33"/>
    </location>
</feature>
<feature type="compositionally biased region" description="Polar residues" evidence="2">
    <location>
        <begin position="47"/>
        <end position="66"/>
    </location>
</feature>
<feature type="compositionally biased region" description="Basic residues" evidence="2">
    <location>
        <begin position="332"/>
        <end position="343"/>
    </location>
</feature>
<feature type="binding site" evidence="1">
    <location>
        <position position="198"/>
    </location>
    <ligand>
        <name>Zn(2+)</name>
        <dbReference type="ChEBI" id="CHEBI:29105"/>
    </ligand>
</feature>
<feature type="binding site" evidence="1">
    <location>
        <position position="199"/>
    </location>
    <ligand>
        <name>Zn(2+)</name>
        <dbReference type="ChEBI" id="CHEBI:29105"/>
    </ligand>
</feature>
<feature type="binding site" evidence="1">
    <location>
        <position position="202"/>
    </location>
    <ligand>
        <name>Zn(2+)</name>
        <dbReference type="ChEBI" id="CHEBI:29105"/>
    </ligand>
</feature>
<feature type="binding site" evidence="1">
    <location>
        <position position="214"/>
    </location>
    <ligand>
        <name>Zn(2+)</name>
        <dbReference type="ChEBI" id="CHEBI:29105"/>
    </ligand>
</feature>
<protein>
    <recommendedName>
        <fullName evidence="1">Ubiquinone biosynthesis protein COQ4, mitochondrial</fullName>
    </recommendedName>
    <alternativeName>
        <fullName>4-hydroxy-3-methoxy-5-polyprenylbenzoate decarboxylase</fullName>
        <ecNumber evidence="1">4.1.1.130</ecNumber>
    </alternativeName>
    <alternativeName>
        <fullName evidence="1">Coenzyme Q biosynthesis protein 4</fullName>
    </alternativeName>
</protein>
<accession>Q4P5W8</accession>
<accession>A0A0D1DY01</accession>